<protein>
    <recommendedName>
        <fullName evidence="1">Polyamine aminopropyltransferase</fullName>
    </recommendedName>
    <alternativeName>
        <fullName evidence="1">Putrescine aminopropyltransferase</fullName>
        <shortName evidence="1">PAPT</shortName>
    </alternativeName>
    <alternativeName>
        <fullName evidence="1">Spermidine synthase</fullName>
        <shortName evidence="1">SPDS</shortName>
        <shortName evidence="1">SPDSY</shortName>
        <ecNumber evidence="1">2.5.1.16</ecNumber>
    </alternativeName>
</protein>
<sequence>MFGWHWLLEWQTPYEFHGHLIEKVFAEEKTPYQHVTLVEFTRFGKGLIIDGKVQSTLYDEHIYHELLVHPLLLSLPKPPKNVLILGGGEGATLREVLKYKSVEKAVMVDIDEKVIEFAKKYLYEWHQGAFEDKRTSLVITDGLKFINETKDKYDAIILDLTDPIKDSTSYMLYTKEFYEKLRGILNQGGGIVTQATSPSFSLEVYVTIYNTIKEVFKEASASYTYMASFDGLWGFVYGGVRPDLLSEDEVNSRIRERISGQLRFYDDYSHKISFSLPKNIKSEFKKITKVSTEKDPIYVPA</sequence>
<accession>C3MVE5</accession>
<organism>
    <name type="scientific">Saccharolobus islandicus (strain M.14.25 / Kamchatka #1)</name>
    <name type="common">Sulfolobus islandicus</name>
    <dbReference type="NCBI Taxonomy" id="427317"/>
    <lineage>
        <taxon>Archaea</taxon>
        <taxon>Thermoproteota</taxon>
        <taxon>Thermoprotei</taxon>
        <taxon>Sulfolobales</taxon>
        <taxon>Sulfolobaceae</taxon>
        <taxon>Saccharolobus</taxon>
    </lineage>
</organism>
<proteinExistence type="inferred from homology"/>
<comment type="function">
    <text evidence="1">Catalyzes the irreversible transfer of a propylamine group from the amino donor S-adenosylmethioninamine (decarboxy-AdoMet) to putrescine (1,4-diaminobutane) to yield spermidine.</text>
</comment>
<comment type="catalytic activity">
    <reaction evidence="1">
        <text>S-adenosyl 3-(methylsulfanyl)propylamine + putrescine = S-methyl-5'-thioadenosine + spermidine + H(+)</text>
        <dbReference type="Rhea" id="RHEA:12721"/>
        <dbReference type="ChEBI" id="CHEBI:15378"/>
        <dbReference type="ChEBI" id="CHEBI:17509"/>
        <dbReference type="ChEBI" id="CHEBI:57443"/>
        <dbReference type="ChEBI" id="CHEBI:57834"/>
        <dbReference type="ChEBI" id="CHEBI:326268"/>
        <dbReference type="EC" id="2.5.1.16"/>
    </reaction>
</comment>
<comment type="pathway">
    <text evidence="1">Amine and polyamine biosynthesis; spermidine biosynthesis; spermidine from putrescine: step 1/1.</text>
</comment>
<comment type="subunit">
    <text evidence="1">Homodimer or homotetramer.</text>
</comment>
<comment type="subcellular location">
    <subcellularLocation>
        <location evidence="1">Cytoplasm</location>
    </subcellularLocation>
</comment>
<comment type="similarity">
    <text evidence="1">Belongs to the spermidine/spermine synthase family.</text>
</comment>
<evidence type="ECO:0000255" key="1">
    <source>
        <dbReference type="HAMAP-Rule" id="MF_00198"/>
    </source>
</evidence>
<feature type="chain" id="PRO_1000204080" description="Polyamine aminopropyltransferase">
    <location>
        <begin position="1"/>
        <end position="301"/>
    </location>
</feature>
<feature type="domain" description="PABS" evidence="1">
    <location>
        <begin position="4"/>
        <end position="240"/>
    </location>
</feature>
<feature type="active site" description="Proton acceptor" evidence="1">
    <location>
        <position position="159"/>
    </location>
</feature>
<feature type="binding site" evidence="1">
    <location>
        <position position="33"/>
    </location>
    <ligand>
        <name>S-methyl-5'-thioadenosine</name>
        <dbReference type="ChEBI" id="CHEBI:17509"/>
    </ligand>
</feature>
<feature type="binding site" evidence="1">
    <location>
        <position position="64"/>
    </location>
    <ligand>
        <name>spermidine</name>
        <dbReference type="ChEBI" id="CHEBI:57834"/>
    </ligand>
</feature>
<feature type="binding site" evidence="1">
    <location>
        <position position="89"/>
    </location>
    <ligand>
        <name>spermidine</name>
        <dbReference type="ChEBI" id="CHEBI:57834"/>
    </ligand>
</feature>
<feature type="binding site" evidence="1">
    <location>
        <position position="109"/>
    </location>
    <ligand>
        <name>S-methyl-5'-thioadenosine</name>
        <dbReference type="ChEBI" id="CHEBI:17509"/>
    </ligand>
</feature>
<feature type="binding site" evidence="1">
    <location>
        <begin position="141"/>
        <end position="142"/>
    </location>
    <ligand>
        <name>S-methyl-5'-thioadenosine</name>
        <dbReference type="ChEBI" id="CHEBI:17509"/>
    </ligand>
</feature>
<keyword id="KW-0963">Cytoplasm</keyword>
<keyword id="KW-0620">Polyamine biosynthesis</keyword>
<keyword id="KW-0745">Spermidine biosynthesis</keyword>
<keyword id="KW-0808">Transferase</keyword>
<name>SPEE_SACI4</name>
<gene>
    <name evidence="1" type="primary">speE</name>
    <name type="ordered locus">M1425_1386</name>
</gene>
<dbReference type="EC" id="2.5.1.16" evidence="1"/>
<dbReference type="EMBL" id="CP001400">
    <property type="protein sequence ID" value="ACP38140.1"/>
    <property type="molecule type" value="Genomic_DNA"/>
</dbReference>
<dbReference type="RefSeq" id="WP_012711385.1">
    <property type="nucleotide sequence ID" value="NC_012588.1"/>
</dbReference>
<dbReference type="SMR" id="C3MVE5"/>
<dbReference type="KEGG" id="sia:M1425_1386"/>
<dbReference type="HOGENOM" id="CLU_048199_0_1_2"/>
<dbReference type="UniPathway" id="UPA00248">
    <property type="reaction ID" value="UER00314"/>
</dbReference>
<dbReference type="Proteomes" id="UP000001350">
    <property type="component" value="Chromosome"/>
</dbReference>
<dbReference type="GO" id="GO:0005737">
    <property type="term" value="C:cytoplasm"/>
    <property type="evidence" value="ECO:0007669"/>
    <property type="project" value="UniProtKB-SubCell"/>
</dbReference>
<dbReference type="GO" id="GO:0004766">
    <property type="term" value="F:spermidine synthase activity"/>
    <property type="evidence" value="ECO:0007669"/>
    <property type="project" value="UniProtKB-UniRule"/>
</dbReference>
<dbReference type="GO" id="GO:0010487">
    <property type="term" value="F:thermospermine synthase activity"/>
    <property type="evidence" value="ECO:0007669"/>
    <property type="project" value="UniProtKB-ARBA"/>
</dbReference>
<dbReference type="GO" id="GO:0008295">
    <property type="term" value="P:spermidine biosynthetic process"/>
    <property type="evidence" value="ECO:0007669"/>
    <property type="project" value="UniProtKB-UniRule"/>
</dbReference>
<dbReference type="CDD" id="cd02440">
    <property type="entry name" value="AdoMet_MTases"/>
    <property type="match status" value="1"/>
</dbReference>
<dbReference type="FunFam" id="2.30.140.10:FF:000017">
    <property type="entry name" value="Polyamine aminopropyltransferase"/>
    <property type="match status" value="1"/>
</dbReference>
<dbReference type="FunFam" id="3.40.50.150:FF:000088">
    <property type="entry name" value="Polyamine aminopropyltransferase"/>
    <property type="match status" value="1"/>
</dbReference>
<dbReference type="Gene3D" id="2.30.140.10">
    <property type="entry name" value="Spermidine synthase, tetramerisation domain"/>
    <property type="match status" value="1"/>
</dbReference>
<dbReference type="Gene3D" id="3.40.50.150">
    <property type="entry name" value="Vaccinia Virus protein VP39"/>
    <property type="match status" value="1"/>
</dbReference>
<dbReference type="HAMAP" id="MF_00198">
    <property type="entry name" value="Spermidine_synth"/>
    <property type="match status" value="1"/>
</dbReference>
<dbReference type="InterPro" id="IPR030374">
    <property type="entry name" value="PABS"/>
</dbReference>
<dbReference type="InterPro" id="IPR030373">
    <property type="entry name" value="PABS_CS"/>
</dbReference>
<dbReference type="InterPro" id="IPR029063">
    <property type="entry name" value="SAM-dependent_MTases_sf"/>
</dbReference>
<dbReference type="InterPro" id="IPR001045">
    <property type="entry name" value="Spermi_synthase"/>
</dbReference>
<dbReference type="InterPro" id="IPR035246">
    <property type="entry name" value="Spermidine_synt_N"/>
</dbReference>
<dbReference type="InterPro" id="IPR037163">
    <property type="entry name" value="Spermidine_synt_N_sf"/>
</dbReference>
<dbReference type="PANTHER" id="PTHR43317">
    <property type="entry name" value="THERMOSPERMINE SYNTHASE ACAULIS5"/>
    <property type="match status" value="1"/>
</dbReference>
<dbReference type="PANTHER" id="PTHR43317:SF1">
    <property type="entry name" value="THERMOSPERMINE SYNTHASE ACAULIS5"/>
    <property type="match status" value="1"/>
</dbReference>
<dbReference type="Pfam" id="PF17284">
    <property type="entry name" value="Spermine_synt_N"/>
    <property type="match status" value="1"/>
</dbReference>
<dbReference type="Pfam" id="PF01564">
    <property type="entry name" value="Spermine_synth"/>
    <property type="match status" value="1"/>
</dbReference>
<dbReference type="SUPFAM" id="SSF53335">
    <property type="entry name" value="S-adenosyl-L-methionine-dependent methyltransferases"/>
    <property type="match status" value="1"/>
</dbReference>
<dbReference type="PROSITE" id="PS01330">
    <property type="entry name" value="PABS_1"/>
    <property type="match status" value="1"/>
</dbReference>
<dbReference type="PROSITE" id="PS51006">
    <property type="entry name" value="PABS_2"/>
    <property type="match status" value="1"/>
</dbReference>
<reference key="1">
    <citation type="journal article" date="2009" name="Proc. Natl. Acad. Sci. U.S.A.">
        <title>Biogeography of the Sulfolobus islandicus pan-genome.</title>
        <authorList>
            <person name="Reno M.L."/>
            <person name="Held N.L."/>
            <person name="Fields C.J."/>
            <person name="Burke P.V."/>
            <person name="Whitaker R.J."/>
        </authorList>
    </citation>
    <scope>NUCLEOTIDE SEQUENCE [LARGE SCALE GENOMIC DNA]</scope>
    <source>
        <strain>M.14.25 / Kamchatka #1</strain>
    </source>
</reference>